<proteinExistence type="inferred from homology"/>
<reference key="1">
    <citation type="journal article" date="2011" name="J. Bacteriol.">
        <title>Comparative genomics of 28 Salmonella enterica isolates: evidence for CRISPR-mediated adaptive sublineage evolution.</title>
        <authorList>
            <person name="Fricke W.F."/>
            <person name="Mammel M.K."/>
            <person name="McDermott P.F."/>
            <person name="Tartera C."/>
            <person name="White D.G."/>
            <person name="Leclerc J.E."/>
            <person name="Ravel J."/>
            <person name="Cebula T.A."/>
        </authorList>
    </citation>
    <scope>NUCLEOTIDE SEQUENCE [LARGE SCALE GENOMIC DNA]</scope>
    <source>
        <strain>SL254</strain>
    </source>
</reference>
<comment type="function">
    <text evidence="1">Zinc transporter. Acts as a Zn(2+):proton symporter, which likely mediates zinc ion uptake.</text>
</comment>
<comment type="catalytic activity">
    <reaction evidence="1">
        <text>Zn(2+)(out) + H(+)(out) = Zn(2+)(in) + H(+)(in)</text>
        <dbReference type="Rhea" id="RHEA:71195"/>
        <dbReference type="ChEBI" id="CHEBI:15378"/>
        <dbReference type="ChEBI" id="CHEBI:29105"/>
    </reaction>
    <physiologicalReaction direction="left-to-right" evidence="1">
        <dbReference type="Rhea" id="RHEA:71196"/>
    </physiologicalReaction>
</comment>
<comment type="subcellular location">
    <subcellularLocation>
        <location evidence="1">Cell inner membrane</location>
        <topology evidence="1">Multi-pass membrane protein</topology>
    </subcellularLocation>
</comment>
<comment type="similarity">
    <text evidence="1">Belongs to the CorA metal ion transporter (MIT) (TC 1.A.35) family.</text>
</comment>
<evidence type="ECO:0000255" key="1">
    <source>
        <dbReference type="HAMAP-Rule" id="MF_01565"/>
    </source>
</evidence>
<sequence length="327" mass="36789">MEAIKGSDVNVPDAVFAWLLDGRGGVKPLEDNDVIDSQHPCWLHLNYTHPDSARWLASTPLLPNNVRDALAGESSRPRVSRMGEGTLITLRCINGSTDERPDQLVAMRLYMDERFIVSTRQRKVLALDDVVSDLQEGTGPVDCGSWLVDVCDALTDHASEFIEELHDKIIDLEDNLLDQQIPPRGFLALLRKQLIVMRRYMAPQRDVYARLASERLPWMSDDHRRRMQDIADRLGRGLDEIDACIARTGIMADEIAQVMQESLARRTYTMSLMAMVFLPSTFLTGLFGVNLGGIPGGGWRFGFSLFCILLVVLIGGVTLWLHRSKWL</sequence>
<keyword id="KW-0997">Cell inner membrane</keyword>
<keyword id="KW-1003">Cell membrane</keyword>
<keyword id="KW-0406">Ion transport</keyword>
<keyword id="KW-0472">Membrane</keyword>
<keyword id="KW-0812">Transmembrane</keyword>
<keyword id="KW-1133">Transmembrane helix</keyword>
<keyword id="KW-0813">Transport</keyword>
<keyword id="KW-0862">Zinc</keyword>
<feature type="chain" id="PRO_1000189728" description="Zinc transport protein ZntB">
    <location>
        <begin position="1"/>
        <end position="327"/>
    </location>
</feature>
<feature type="topological domain" description="Cytoplasmic" evidence="1">
    <location>
        <begin position="1"/>
        <end position="273"/>
    </location>
</feature>
<feature type="transmembrane region" description="Helical" evidence="1">
    <location>
        <begin position="274"/>
        <end position="294"/>
    </location>
</feature>
<feature type="topological domain" description="Periplasmic" evidence="1">
    <location>
        <begin position="295"/>
        <end position="300"/>
    </location>
</feature>
<feature type="transmembrane region" description="Helical" evidence="1">
    <location>
        <begin position="301"/>
        <end position="321"/>
    </location>
</feature>
<feature type="topological domain" description="Cytoplasmic" evidence="1">
    <location>
        <begin position="322"/>
        <end position="327"/>
    </location>
</feature>
<accession>B4T6P7</accession>
<dbReference type="EMBL" id="CP001113">
    <property type="protein sequence ID" value="ACF65529.1"/>
    <property type="molecule type" value="Genomic_DNA"/>
</dbReference>
<dbReference type="RefSeq" id="WP_000387374.1">
    <property type="nucleotide sequence ID" value="NZ_CCMR01000003.1"/>
</dbReference>
<dbReference type="SMR" id="B4T6P7"/>
<dbReference type="KEGG" id="see:SNSL254_A1777"/>
<dbReference type="HOGENOM" id="CLU_007127_2_0_6"/>
<dbReference type="Proteomes" id="UP000008824">
    <property type="component" value="Chromosome"/>
</dbReference>
<dbReference type="GO" id="GO:0005886">
    <property type="term" value="C:plasma membrane"/>
    <property type="evidence" value="ECO:0007669"/>
    <property type="project" value="UniProtKB-SubCell"/>
</dbReference>
<dbReference type="GO" id="GO:0050897">
    <property type="term" value="F:cobalt ion binding"/>
    <property type="evidence" value="ECO:0007669"/>
    <property type="project" value="TreeGrafter"/>
</dbReference>
<dbReference type="GO" id="GO:0015087">
    <property type="term" value="F:cobalt ion transmembrane transporter activity"/>
    <property type="evidence" value="ECO:0007669"/>
    <property type="project" value="TreeGrafter"/>
</dbReference>
<dbReference type="GO" id="GO:0000287">
    <property type="term" value="F:magnesium ion binding"/>
    <property type="evidence" value="ECO:0007669"/>
    <property type="project" value="TreeGrafter"/>
</dbReference>
<dbReference type="GO" id="GO:0015095">
    <property type="term" value="F:magnesium ion transmembrane transporter activity"/>
    <property type="evidence" value="ECO:0007669"/>
    <property type="project" value="TreeGrafter"/>
</dbReference>
<dbReference type="GO" id="GO:0005385">
    <property type="term" value="F:zinc ion transmembrane transporter activity"/>
    <property type="evidence" value="ECO:0007669"/>
    <property type="project" value="UniProtKB-UniRule"/>
</dbReference>
<dbReference type="CDD" id="cd12833">
    <property type="entry name" value="ZntB-like_1"/>
    <property type="match status" value="1"/>
</dbReference>
<dbReference type="FunFam" id="1.20.58.340:FF:000002">
    <property type="entry name" value="Zinc transport protein ZntB"/>
    <property type="match status" value="1"/>
</dbReference>
<dbReference type="FunFam" id="3.30.460.20:FF:000001">
    <property type="entry name" value="Zinc transport protein ZntB"/>
    <property type="match status" value="1"/>
</dbReference>
<dbReference type="Gene3D" id="3.30.460.20">
    <property type="entry name" value="CorA soluble domain-like"/>
    <property type="match status" value="1"/>
</dbReference>
<dbReference type="Gene3D" id="1.20.58.340">
    <property type="entry name" value="Magnesium transport protein CorA, transmembrane region"/>
    <property type="match status" value="2"/>
</dbReference>
<dbReference type="HAMAP" id="MF_01565">
    <property type="entry name" value="ZntB"/>
    <property type="match status" value="1"/>
</dbReference>
<dbReference type="InterPro" id="IPR045861">
    <property type="entry name" value="CorA_cytoplasmic_dom"/>
</dbReference>
<dbReference type="InterPro" id="IPR045863">
    <property type="entry name" value="CorA_TM1_TM2"/>
</dbReference>
<dbReference type="InterPro" id="IPR002523">
    <property type="entry name" value="MgTranspt_CorA/ZnTranspt_ZntB"/>
</dbReference>
<dbReference type="InterPro" id="IPR023714">
    <property type="entry name" value="Zn_transp_ZntB"/>
</dbReference>
<dbReference type="NCBIfam" id="NF007092">
    <property type="entry name" value="PRK09546.1"/>
    <property type="match status" value="1"/>
</dbReference>
<dbReference type="PANTHER" id="PTHR46494">
    <property type="entry name" value="CORA FAMILY METAL ION TRANSPORTER (EUROFUNG)"/>
    <property type="match status" value="1"/>
</dbReference>
<dbReference type="PANTHER" id="PTHR46494:SF3">
    <property type="entry name" value="ZINC TRANSPORT PROTEIN ZNTB"/>
    <property type="match status" value="1"/>
</dbReference>
<dbReference type="Pfam" id="PF01544">
    <property type="entry name" value="CorA"/>
    <property type="match status" value="1"/>
</dbReference>
<dbReference type="SUPFAM" id="SSF143865">
    <property type="entry name" value="CorA soluble domain-like"/>
    <property type="match status" value="1"/>
</dbReference>
<dbReference type="SUPFAM" id="SSF144083">
    <property type="entry name" value="Magnesium transport protein CorA, transmembrane region"/>
    <property type="match status" value="1"/>
</dbReference>
<organism>
    <name type="scientific">Salmonella newport (strain SL254)</name>
    <dbReference type="NCBI Taxonomy" id="423368"/>
    <lineage>
        <taxon>Bacteria</taxon>
        <taxon>Pseudomonadati</taxon>
        <taxon>Pseudomonadota</taxon>
        <taxon>Gammaproteobacteria</taxon>
        <taxon>Enterobacterales</taxon>
        <taxon>Enterobacteriaceae</taxon>
        <taxon>Salmonella</taxon>
    </lineage>
</organism>
<name>ZNTB_SALNS</name>
<protein>
    <recommendedName>
        <fullName evidence="1">Zinc transport protein ZntB</fullName>
    </recommendedName>
</protein>
<gene>
    <name evidence="1" type="primary">zntB</name>
    <name type="ordered locus">SNSL254_A1777</name>
</gene>